<comment type="function">
    <text evidence="1">Binds 16S rRNA, required for the assembly of 30S particles.</text>
</comment>
<comment type="subunit">
    <text evidence="1">Part of the 30S ribosomal subunit.</text>
</comment>
<comment type="subcellular location">
    <subcellularLocation>
        <location>Plastid</location>
    </subcellularLocation>
</comment>
<comment type="similarity">
    <text evidence="1">Belongs to the universal ribosomal protein uS14 family.</text>
</comment>
<accession>A1YGK9</accession>
<protein>
    <recommendedName>
        <fullName evidence="1">Small ribosomal subunit protein uS14c</fullName>
    </recommendedName>
    <alternativeName>
        <fullName evidence="2">30S ribosomal protein S14, plastid</fullName>
    </alternativeName>
</protein>
<dbReference type="EMBL" id="DQ979325">
    <property type="protein sequence ID" value="ABL14216.1"/>
    <property type="molecule type" value="Genomic_DNA"/>
</dbReference>
<dbReference type="EMBL" id="DQ979327">
    <property type="protein sequence ID" value="ABL14218.1"/>
    <property type="molecule type" value="Genomic_DNA"/>
</dbReference>
<dbReference type="EMBL" id="DQ979328">
    <property type="protein sequence ID" value="ABL14219.1"/>
    <property type="molecule type" value="Genomic_DNA"/>
</dbReference>
<dbReference type="EMBL" id="EU043314">
    <property type="protein sequence ID" value="ABS54481.1"/>
    <property type="molecule type" value="Genomic_DNA"/>
</dbReference>
<dbReference type="RefSeq" id="YP_001687220.1">
    <property type="nucleotide sequence ID" value="NC_010359.1"/>
</dbReference>
<dbReference type="SMR" id="A1YGK9"/>
<dbReference type="GeneID" id="5952171"/>
<dbReference type="GO" id="GO:0009536">
    <property type="term" value="C:plastid"/>
    <property type="evidence" value="ECO:0007669"/>
    <property type="project" value="UniProtKB-SubCell"/>
</dbReference>
<dbReference type="GO" id="GO:0015935">
    <property type="term" value="C:small ribosomal subunit"/>
    <property type="evidence" value="ECO:0007669"/>
    <property type="project" value="TreeGrafter"/>
</dbReference>
<dbReference type="GO" id="GO:0019843">
    <property type="term" value="F:rRNA binding"/>
    <property type="evidence" value="ECO:0007669"/>
    <property type="project" value="UniProtKB-KW"/>
</dbReference>
<dbReference type="GO" id="GO:0003735">
    <property type="term" value="F:structural constituent of ribosome"/>
    <property type="evidence" value="ECO:0007669"/>
    <property type="project" value="InterPro"/>
</dbReference>
<dbReference type="GO" id="GO:0006412">
    <property type="term" value="P:translation"/>
    <property type="evidence" value="ECO:0007669"/>
    <property type="project" value="InterPro"/>
</dbReference>
<dbReference type="FunFam" id="1.10.287.1480:FF:000001">
    <property type="entry name" value="30S ribosomal protein S14"/>
    <property type="match status" value="1"/>
</dbReference>
<dbReference type="Gene3D" id="1.10.287.1480">
    <property type="match status" value="1"/>
</dbReference>
<dbReference type="HAMAP" id="MF_00537">
    <property type="entry name" value="Ribosomal_uS14_1"/>
    <property type="match status" value="1"/>
</dbReference>
<dbReference type="InterPro" id="IPR001209">
    <property type="entry name" value="Ribosomal_uS14"/>
</dbReference>
<dbReference type="InterPro" id="IPR023036">
    <property type="entry name" value="Ribosomal_uS14_bac/plastid"/>
</dbReference>
<dbReference type="InterPro" id="IPR018271">
    <property type="entry name" value="Ribosomal_uS14_CS"/>
</dbReference>
<dbReference type="NCBIfam" id="NF006477">
    <property type="entry name" value="PRK08881.1"/>
    <property type="match status" value="1"/>
</dbReference>
<dbReference type="PANTHER" id="PTHR19836">
    <property type="entry name" value="30S RIBOSOMAL PROTEIN S14"/>
    <property type="match status" value="1"/>
</dbReference>
<dbReference type="PANTHER" id="PTHR19836:SF19">
    <property type="entry name" value="SMALL RIBOSOMAL SUBUNIT PROTEIN US14M"/>
    <property type="match status" value="1"/>
</dbReference>
<dbReference type="Pfam" id="PF00253">
    <property type="entry name" value="Ribosomal_S14"/>
    <property type="match status" value="1"/>
</dbReference>
<dbReference type="SUPFAM" id="SSF57716">
    <property type="entry name" value="Glucocorticoid receptor-like (DNA-binding domain)"/>
    <property type="match status" value="1"/>
</dbReference>
<dbReference type="PROSITE" id="PS00527">
    <property type="entry name" value="RIBOSOMAL_S14"/>
    <property type="match status" value="1"/>
</dbReference>
<reference key="1">
    <citation type="journal article" date="2008" name="Bot. J. Linn. Soc.">
        <title>Origin and relationships of the myco-heterotrophic liverwort Cryptothallus mirabilis Malmb. (Metzgeriales, Marchantiophyta).</title>
        <authorList>
            <person name="Wickett N.J."/>
            <person name="Goffinet B."/>
        </authorList>
    </citation>
    <scope>NUCLEOTIDE SEQUENCE [GENOMIC DNA]</scope>
</reference>
<reference key="2">
    <citation type="journal article" date="2008" name="Mol. Biol. Evol.">
        <title>Functional gene losses occur with minimal size reduction in the plastid genome of the parasitic liverwort Aneura mirabilis.</title>
        <authorList>
            <person name="Wickett N.J."/>
            <person name="Zhang Y."/>
            <person name="Hansen S.K."/>
            <person name="Roper J.M."/>
            <person name="Kuehl J.V."/>
            <person name="Plock S.A."/>
            <person name="Wolf P.G."/>
            <person name="dePamphilis C.W."/>
            <person name="Boore J.L."/>
            <person name="Goffinet B."/>
        </authorList>
    </citation>
    <scope>NUCLEOTIDE SEQUENCE [LARGE SCALE GENOMIC DNA]</scope>
</reference>
<proteinExistence type="inferred from homology"/>
<feature type="chain" id="PRO_0000354397" description="Small ribosomal subunit protein uS14c">
    <location>
        <begin position="1"/>
        <end position="100"/>
    </location>
</feature>
<name>RR14_ANEMR</name>
<keyword id="KW-0934">Plastid</keyword>
<keyword id="KW-0687">Ribonucleoprotein</keyword>
<keyword id="KW-0689">Ribosomal protein</keyword>
<keyword id="KW-0694">RNA-binding</keyword>
<keyword id="KW-0699">rRNA-binding</keyword>
<gene>
    <name evidence="1" type="primary">rps14</name>
</gene>
<sequence>MAKKSLIQREMKRRILNRKYSSLRKFLREKIDKVSSLDERWKIRKNLQSLPRNSAPSRQRRRCFITGRSRANYRDFGLSRHLLREMAHSCLLPGITKSSW</sequence>
<evidence type="ECO:0000255" key="1">
    <source>
        <dbReference type="HAMAP-Rule" id="MF_00537"/>
    </source>
</evidence>
<evidence type="ECO:0000305" key="2"/>
<organism>
    <name type="scientific">Aneura mirabilis</name>
    <name type="common">Parasitic liverwort</name>
    <name type="synonym">Cryptothallus mirabilis</name>
    <dbReference type="NCBI Taxonomy" id="280810"/>
    <lineage>
        <taxon>Eukaryota</taxon>
        <taxon>Viridiplantae</taxon>
        <taxon>Streptophyta</taxon>
        <taxon>Embryophyta</taxon>
        <taxon>Marchantiophyta</taxon>
        <taxon>Jungermanniopsida</taxon>
        <taxon>Metzgeriidae</taxon>
        <taxon>Metzgeriales</taxon>
        <taxon>Aneuraceae</taxon>
        <taxon>Aneura</taxon>
    </lineage>
</organism>
<geneLocation type="non-photosynthetic plastid"/>